<dbReference type="EMBL" id="CP000712">
    <property type="protein sequence ID" value="ABQ80974.1"/>
    <property type="molecule type" value="Genomic_DNA"/>
</dbReference>
<dbReference type="SMR" id="A5WA14"/>
<dbReference type="KEGG" id="ppf:Pput_4854"/>
<dbReference type="eggNOG" id="COG2353">
    <property type="taxonomic scope" value="Bacteria"/>
</dbReference>
<dbReference type="HOGENOM" id="CLU_071003_1_2_6"/>
<dbReference type="GO" id="GO:0042597">
    <property type="term" value="C:periplasmic space"/>
    <property type="evidence" value="ECO:0007669"/>
    <property type="project" value="UniProtKB-SubCell"/>
</dbReference>
<dbReference type="Gene3D" id="2.40.128.110">
    <property type="entry name" value="Lipid/polyisoprenoid-binding, YceI-like"/>
    <property type="match status" value="1"/>
</dbReference>
<dbReference type="HAMAP" id="MF_00780">
    <property type="entry name" value="UPF0312"/>
    <property type="match status" value="1"/>
</dbReference>
<dbReference type="InterPro" id="IPR007372">
    <property type="entry name" value="Lipid/polyisoprenoid-bd_YceI"/>
</dbReference>
<dbReference type="InterPro" id="IPR036761">
    <property type="entry name" value="TTHA0802/YceI-like_sf"/>
</dbReference>
<dbReference type="InterPro" id="IPR023480">
    <property type="entry name" value="UPF0312/YceI"/>
</dbReference>
<dbReference type="NCBIfam" id="NF002994">
    <property type="entry name" value="PRK03757.1"/>
    <property type="match status" value="1"/>
</dbReference>
<dbReference type="PANTHER" id="PTHR34406">
    <property type="entry name" value="PROTEIN YCEI"/>
    <property type="match status" value="1"/>
</dbReference>
<dbReference type="PANTHER" id="PTHR34406:SF1">
    <property type="entry name" value="PROTEIN YCEI"/>
    <property type="match status" value="1"/>
</dbReference>
<dbReference type="Pfam" id="PF04264">
    <property type="entry name" value="YceI"/>
    <property type="match status" value="1"/>
</dbReference>
<dbReference type="SMART" id="SM00867">
    <property type="entry name" value="YceI"/>
    <property type="match status" value="1"/>
</dbReference>
<dbReference type="SUPFAM" id="SSF101874">
    <property type="entry name" value="YceI-like"/>
    <property type="match status" value="1"/>
</dbReference>
<proteinExistence type="inferred from homology"/>
<reference key="1">
    <citation type="submission" date="2007-05" db="EMBL/GenBank/DDBJ databases">
        <title>Complete sequence of Pseudomonas putida F1.</title>
        <authorList>
            <consortium name="US DOE Joint Genome Institute"/>
            <person name="Copeland A."/>
            <person name="Lucas S."/>
            <person name="Lapidus A."/>
            <person name="Barry K."/>
            <person name="Detter J.C."/>
            <person name="Glavina del Rio T."/>
            <person name="Hammon N."/>
            <person name="Israni S."/>
            <person name="Dalin E."/>
            <person name="Tice H."/>
            <person name="Pitluck S."/>
            <person name="Chain P."/>
            <person name="Malfatti S."/>
            <person name="Shin M."/>
            <person name="Vergez L."/>
            <person name="Schmutz J."/>
            <person name="Larimer F."/>
            <person name="Land M."/>
            <person name="Hauser L."/>
            <person name="Kyrpides N."/>
            <person name="Lykidis A."/>
            <person name="Parales R."/>
            <person name="Richardson P."/>
        </authorList>
    </citation>
    <scope>NUCLEOTIDE SEQUENCE [LARGE SCALE GENOMIC DNA]</scope>
    <source>
        <strain>ATCC 700007 / DSM 6899 / JCM 31910 / BCRC 17059 / LMG 24140 / F1</strain>
    </source>
</reference>
<name>Y4854_PSEP1</name>
<evidence type="ECO:0000255" key="1">
    <source>
        <dbReference type="HAMAP-Rule" id="MF_00780"/>
    </source>
</evidence>
<comment type="subcellular location">
    <subcellularLocation>
        <location evidence="1">Periplasm</location>
    </subcellularLocation>
</comment>
<comment type="similarity">
    <text evidence="1">Belongs to the UPF0312 family. Type 1 subfamily.</text>
</comment>
<gene>
    <name type="ordered locus">Pput_4854</name>
</gene>
<feature type="signal peptide" evidence="1">
    <location>
        <begin position="1"/>
        <end position="23"/>
    </location>
</feature>
<feature type="chain" id="PRO_5000252501" description="UPF0312 protein Pput_4854">
    <location>
        <begin position="24"/>
        <end position="192"/>
    </location>
</feature>
<accession>A5WA14</accession>
<keyword id="KW-0574">Periplasm</keyword>
<keyword id="KW-0732">Signal</keyword>
<sequence length="192" mass="20694">MLKKTFAALALGTALLSAGQAMAAEYKIDKEGQHAFVDWKISHLGYSFIHGTFKDFDGNFSWDSAKPEASKISVDLKTASLWSNHAERDKHIASADFLDVKKYPDAKFVSTSVKSTGDKTADVTGDLTMHGVTKPVTFKATFNGEGKDPWGGERAGFNATTTLNLNDFGIKGPGATSQTLDLDISVEGVKQK</sequence>
<organism>
    <name type="scientific">Pseudomonas putida (strain ATCC 700007 / DSM 6899 / JCM 31910 / BCRC 17059 / LMG 24140 / F1)</name>
    <dbReference type="NCBI Taxonomy" id="351746"/>
    <lineage>
        <taxon>Bacteria</taxon>
        <taxon>Pseudomonadati</taxon>
        <taxon>Pseudomonadota</taxon>
        <taxon>Gammaproteobacteria</taxon>
        <taxon>Pseudomonadales</taxon>
        <taxon>Pseudomonadaceae</taxon>
        <taxon>Pseudomonas</taxon>
    </lineage>
</organism>
<protein>
    <recommendedName>
        <fullName evidence="1">UPF0312 protein Pput_4854</fullName>
    </recommendedName>
</protein>